<sequence>MRLNHKQGEAGEDAALAFLQSQGCTLLARNWHCAYGEIDLIVKNGGMILFVEVKYRKNRQFGGVAYSISPSKLLKLQRSVEYYLQQNRLTNVPCRLDAVLIEGSRPPEWIQNITG</sequence>
<keyword id="KW-1185">Reference proteome</keyword>
<accession>Q9JXE2</accession>
<protein>
    <recommendedName>
        <fullName evidence="1">UPF0102 protein NMB2089</fullName>
    </recommendedName>
</protein>
<organism>
    <name type="scientific">Neisseria meningitidis serogroup B (strain ATCC BAA-335 / MC58)</name>
    <dbReference type="NCBI Taxonomy" id="122586"/>
    <lineage>
        <taxon>Bacteria</taxon>
        <taxon>Pseudomonadati</taxon>
        <taxon>Pseudomonadota</taxon>
        <taxon>Betaproteobacteria</taxon>
        <taxon>Neisseriales</taxon>
        <taxon>Neisseriaceae</taxon>
        <taxon>Neisseria</taxon>
    </lineage>
</organism>
<comment type="similarity">
    <text evidence="1">Belongs to the UPF0102 family.</text>
</comment>
<proteinExistence type="inferred from homology"/>
<dbReference type="EMBL" id="AE002098">
    <property type="protein sequence ID" value="AAF42406.1"/>
    <property type="molecule type" value="Genomic_DNA"/>
</dbReference>
<dbReference type="PIR" id="G81007">
    <property type="entry name" value="G81007"/>
</dbReference>
<dbReference type="RefSeq" id="NP_275077.1">
    <property type="nucleotide sequence ID" value="NC_003112.2"/>
</dbReference>
<dbReference type="RefSeq" id="WP_002217775.1">
    <property type="nucleotide sequence ID" value="NC_003112.2"/>
</dbReference>
<dbReference type="SMR" id="Q9JXE2"/>
<dbReference type="FunCoup" id="Q9JXE2">
    <property type="interactions" value="229"/>
</dbReference>
<dbReference type="STRING" id="122586.NMB2089"/>
<dbReference type="PaxDb" id="122586-NMB2089"/>
<dbReference type="KEGG" id="nme:NMB2089"/>
<dbReference type="PATRIC" id="fig|122586.8.peg.2671"/>
<dbReference type="HOGENOM" id="CLU_115353_1_1_4"/>
<dbReference type="InParanoid" id="Q9JXE2"/>
<dbReference type="OrthoDB" id="9794876at2"/>
<dbReference type="Proteomes" id="UP000000425">
    <property type="component" value="Chromosome"/>
</dbReference>
<dbReference type="GO" id="GO:0003676">
    <property type="term" value="F:nucleic acid binding"/>
    <property type="evidence" value="ECO:0007669"/>
    <property type="project" value="InterPro"/>
</dbReference>
<dbReference type="Gene3D" id="3.40.1350.10">
    <property type="match status" value="1"/>
</dbReference>
<dbReference type="HAMAP" id="MF_00048">
    <property type="entry name" value="UPF0102"/>
    <property type="match status" value="1"/>
</dbReference>
<dbReference type="InterPro" id="IPR011335">
    <property type="entry name" value="Restrct_endonuc-II-like"/>
</dbReference>
<dbReference type="InterPro" id="IPR011856">
    <property type="entry name" value="tRNA_endonuc-like_dom_sf"/>
</dbReference>
<dbReference type="InterPro" id="IPR003509">
    <property type="entry name" value="UPF0102_YraN-like"/>
</dbReference>
<dbReference type="NCBIfam" id="NF009150">
    <property type="entry name" value="PRK12497.1-3"/>
    <property type="match status" value="1"/>
</dbReference>
<dbReference type="NCBIfam" id="TIGR00252">
    <property type="entry name" value="YraN family protein"/>
    <property type="match status" value="1"/>
</dbReference>
<dbReference type="PANTHER" id="PTHR34039">
    <property type="entry name" value="UPF0102 PROTEIN YRAN"/>
    <property type="match status" value="1"/>
</dbReference>
<dbReference type="PANTHER" id="PTHR34039:SF1">
    <property type="entry name" value="UPF0102 PROTEIN YRAN"/>
    <property type="match status" value="1"/>
</dbReference>
<dbReference type="Pfam" id="PF02021">
    <property type="entry name" value="UPF0102"/>
    <property type="match status" value="1"/>
</dbReference>
<dbReference type="SUPFAM" id="SSF52980">
    <property type="entry name" value="Restriction endonuclease-like"/>
    <property type="match status" value="1"/>
</dbReference>
<gene>
    <name type="ordered locus">NMB2089</name>
</gene>
<reference key="1">
    <citation type="journal article" date="2000" name="Science">
        <title>Complete genome sequence of Neisseria meningitidis serogroup B strain MC58.</title>
        <authorList>
            <person name="Tettelin H."/>
            <person name="Saunders N.J."/>
            <person name="Heidelberg J.F."/>
            <person name="Jeffries A.C."/>
            <person name="Nelson K.E."/>
            <person name="Eisen J.A."/>
            <person name="Ketchum K.A."/>
            <person name="Hood D.W."/>
            <person name="Peden J.F."/>
            <person name="Dodson R.J."/>
            <person name="Nelson W.C."/>
            <person name="Gwinn M.L."/>
            <person name="DeBoy R.T."/>
            <person name="Peterson J.D."/>
            <person name="Hickey E.K."/>
            <person name="Haft D.H."/>
            <person name="Salzberg S.L."/>
            <person name="White O."/>
            <person name="Fleischmann R.D."/>
            <person name="Dougherty B.A."/>
            <person name="Mason T.M."/>
            <person name="Ciecko A."/>
            <person name="Parksey D.S."/>
            <person name="Blair E."/>
            <person name="Cittone H."/>
            <person name="Clark E.B."/>
            <person name="Cotton M.D."/>
            <person name="Utterback T.R."/>
            <person name="Khouri H.M."/>
            <person name="Qin H."/>
            <person name="Vamathevan J.J."/>
            <person name="Gill J."/>
            <person name="Scarlato V."/>
            <person name="Masignani V."/>
            <person name="Pizza M."/>
            <person name="Grandi G."/>
            <person name="Sun L."/>
            <person name="Smith H.O."/>
            <person name="Fraser C.M."/>
            <person name="Moxon E.R."/>
            <person name="Rappuoli R."/>
            <person name="Venter J.C."/>
        </authorList>
    </citation>
    <scope>NUCLEOTIDE SEQUENCE [LARGE SCALE GENOMIC DNA]</scope>
    <source>
        <strain>ATCC BAA-335 / MC58</strain>
    </source>
</reference>
<evidence type="ECO:0000255" key="1">
    <source>
        <dbReference type="HAMAP-Rule" id="MF_00048"/>
    </source>
</evidence>
<feature type="chain" id="PRO_0000167366" description="UPF0102 protein NMB2089">
    <location>
        <begin position="1"/>
        <end position="115"/>
    </location>
</feature>
<name>Y2089_NEIMB</name>